<name>PDXB_CHRSD</name>
<protein>
    <recommendedName>
        <fullName evidence="1">Erythronate-4-phosphate dehydrogenase</fullName>
        <ecNumber evidence="1">1.1.1.290</ecNumber>
    </recommendedName>
</protein>
<proteinExistence type="inferred from homology"/>
<accession>Q1QXV7</accession>
<keyword id="KW-0963">Cytoplasm</keyword>
<keyword id="KW-0520">NAD</keyword>
<keyword id="KW-0560">Oxidoreductase</keyword>
<keyword id="KW-0664">Pyridoxine biosynthesis</keyword>
<keyword id="KW-1185">Reference proteome</keyword>
<reference key="1">
    <citation type="journal article" date="2011" name="Stand. Genomic Sci.">
        <title>Complete genome sequence of the halophilic and highly halotolerant Chromohalobacter salexigens type strain (1H11(T)).</title>
        <authorList>
            <person name="Copeland A."/>
            <person name="O'Connor K."/>
            <person name="Lucas S."/>
            <person name="Lapidus A."/>
            <person name="Berry K.W."/>
            <person name="Detter J.C."/>
            <person name="Del Rio T.G."/>
            <person name="Hammon N."/>
            <person name="Dalin E."/>
            <person name="Tice H."/>
            <person name="Pitluck S."/>
            <person name="Bruce D."/>
            <person name="Goodwin L."/>
            <person name="Han C."/>
            <person name="Tapia R."/>
            <person name="Saunders E."/>
            <person name="Schmutz J."/>
            <person name="Brettin T."/>
            <person name="Larimer F."/>
            <person name="Land M."/>
            <person name="Hauser L."/>
            <person name="Vargas C."/>
            <person name="Nieto J.J."/>
            <person name="Kyrpides N.C."/>
            <person name="Ivanova N."/>
            <person name="Goker M."/>
            <person name="Klenk H.P."/>
            <person name="Csonka L.N."/>
            <person name="Woyke T."/>
        </authorList>
    </citation>
    <scope>NUCLEOTIDE SEQUENCE [LARGE SCALE GENOMIC DNA]</scope>
    <source>
        <strain>ATCC BAA-138 / DSM 3043 / CIP 106854 / NCIMB 13768 / 1H11</strain>
    </source>
</reference>
<organism>
    <name type="scientific">Chromohalobacter salexigens (strain ATCC BAA-138 / DSM 3043 / CIP 106854 / NCIMB 13768 / 1H11)</name>
    <dbReference type="NCBI Taxonomy" id="290398"/>
    <lineage>
        <taxon>Bacteria</taxon>
        <taxon>Pseudomonadati</taxon>
        <taxon>Pseudomonadota</taxon>
        <taxon>Gammaproteobacteria</taxon>
        <taxon>Oceanospirillales</taxon>
        <taxon>Halomonadaceae</taxon>
        <taxon>Chromohalobacter</taxon>
    </lineage>
</organism>
<evidence type="ECO:0000255" key="1">
    <source>
        <dbReference type="HAMAP-Rule" id="MF_01825"/>
    </source>
</evidence>
<feature type="chain" id="PRO_0000297437" description="Erythronate-4-phosphate dehydrogenase">
    <location>
        <begin position="1"/>
        <end position="383"/>
    </location>
</feature>
<feature type="active site" evidence="1">
    <location>
        <position position="208"/>
    </location>
</feature>
<feature type="active site" evidence="1">
    <location>
        <position position="237"/>
    </location>
</feature>
<feature type="active site" description="Proton donor" evidence="1">
    <location>
        <position position="254"/>
    </location>
</feature>
<feature type="binding site" evidence="1">
    <location>
        <position position="45"/>
    </location>
    <ligand>
        <name>substrate</name>
    </ligand>
</feature>
<feature type="binding site" evidence="1">
    <location>
        <position position="66"/>
    </location>
    <ligand>
        <name>substrate</name>
    </ligand>
</feature>
<feature type="binding site" evidence="1">
    <location>
        <position position="146"/>
    </location>
    <ligand>
        <name>NAD(+)</name>
        <dbReference type="ChEBI" id="CHEBI:57540"/>
    </ligand>
</feature>
<feature type="binding site" evidence="1">
    <location>
        <position position="175"/>
    </location>
    <ligand>
        <name>NAD(+)</name>
        <dbReference type="ChEBI" id="CHEBI:57540"/>
    </ligand>
</feature>
<feature type="binding site" evidence="1">
    <location>
        <position position="232"/>
    </location>
    <ligand>
        <name>NAD(+)</name>
        <dbReference type="ChEBI" id="CHEBI:57540"/>
    </ligand>
</feature>
<feature type="binding site" evidence="1">
    <location>
        <position position="257"/>
    </location>
    <ligand>
        <name>NAD(+)</name>
        <dbReference type="ChEBI" id="CHEBI:57540"/>
    </ligand>
</feature>
<gene>
    <name evidence="1" type="primary">pdxB</name>
    <name type="ordered locus">Csal_1346</name>
</gene>
<sequence>MRILVDENIPLADEFFGELGDITRLPGRDIDAAAVREQDLLVVRSITRVDAALLEGSRVRFVGTCTIGTDHVDLDYLREAGIGFANAPGCNADSVVDYVLSSLLLLAEEDGFHLAGKTIGIVGVGNVGSRLAERLDDLDVECLLCDPPRAEAEGREDFLSLDALLERAEIVCLHTPLVTEGEHATRHLLDASRIDALAPGTVLINAGRGACVDNQALRERLQRANDLRVVLDVWENEPGIDPALYDLVDIATPHIAGHSIDGKMRGTELVYQAAMRQFGLPARKKLGQLKPDPWLRKIVLTPWAPPLEALSLCTRACYDVRRDMLAFDRYRRRMGMATGFDAYRAEYPLRREFSTLRVELKQNKGGLRDALEGFGFKVKLSSK</sequence>
<comment type="function">
    <text evidence="1">Catalyzes the oxidation of erythronate-4-phosphate to 3-hydroxy-2-oxo-4-phosphonooxybutanoate.</text>
</comment>
<comment type="catalytic activity">
    <reaction evidence="1">
        <text>4-phospho-D-erythronate + NAD(+) = (R)-3-hydroxy-2-oxo-4-phosphooxybutanoate + NADH + H(+)</text>
        <dbReference type="Rhea" id="RHEA:18829"/>
        <dbReference type="ChEBI" id="CHEBI:15378"/>
        <dbReference type="ChEBI" id="CHEBI:57540"/>
        <dbReference type="ChEBI" id="CHEBI:57945"/>
        <dbReference type="ChEBI" id="CHEBI:58538"/>
        <dbReference type="ChEBI" id="CHEBI:58766"/>
        <dbReference type="EC" id="1.1.1.290"/>
    </reaction>
</comment>
<comment type="pathway">
    <text evidence="1">Cofactor biosynthesis; pyridoxine 5'-phosphate biosynthesis; pyridoxine 5'-phosphate from D-erythrose 4-phosphate: step 2/5.</text>
</comment>
<comment type="subunit">
    <text evidence="1">Homodimer.</text>
</comment>
<comment type="subcellular location">
    <subcellularLocation>
        <location evidence="1">Cytoplasm</location>
    </subcellularLocation>
</comment>
<comment type="similarity">
    <text evidence="1">Belongs to the D-isomer specific 2-hydroxyacid dehydrogenase family. PdxB subfamily.</text>
</comment>
<dbReference type="EC" id="1.1.1.290" evidence="1"/>
<dbReference type="EMBL" id="CP000285">
    <property type="protein sequence ID" value="ABE58701.1"/>
    <property type="molecule type" value="Genomic_DNA"/>
</dbReference>
<dbReference type="RefSeq" id="WP_011506647.1">
    <property type="nucleotide sequence ID" value="NC_007963.1"/>
</dbReference>
<dbReference type="SMR" id="Q1QXV7"/>
<dbReference type="STRING" id="290398.Csal_1346"/>
<dbReference type="GeneID" id="95334084"/>
<dbReference type="KEGG" id="csa:Csal_1346"/>
<dbReference type="eggNOG" id="COG0111">
    <property type="taxonomic scope" value="Bacteria"/>
</dbReference>
<dbReference type="HOGENOM" id="CLU_019796_4_0_6"/>
<dbReference type="OrthoDB" id="9770208at2"/>
<dbReference type="UniPathway" id="UPA00244">
    <property type="reaction ID" value="UER00310"/>
</dbReference>
<dbReference type="Proteomes" id="UP000000239">
    <property type="component" value="Chromosome"/>
</dbReference>
<dbReference type="GO" id="GO:0005829">
    <property type="term" value="C:cytosol"/>
    <property type="evidence" value="ECO:0007669"/>
    <property type="project" value="TreeGrafter"/>
</dbReference>
<dbReference type="GO" id="GO:0033711">
    <property type="term" value="F:4-phosphoerythronate dehydrogenase activity"/>
    <property type="evidence" value="ECO:0007669"/>
    <property type="project" value="UniProtKB-EC"/>
</dbReference>
<dbReference type="GO" id="GO:0030267">
    <property type="term" value="F:glyoxylate reductase (NADPH) activity"/>
    <property type="evidence" value="ECO:0007669"/>
    <property type="project" value="TreeGrafter"/>
</dbReference>
<dbReference type="GO" id="GO:0016618">
    <property type="term" value="F:hydroxypyruvate reductase [NAD(P)H] activity"/>
    <property type="evidence" value="ECO:0007669"/>
    <property type="project" value="TreeGrafter"/>
</dbReference>
<dbReference type="GO" id="GO:0051287">
    <property type="term" value="F:NAD binding"/>
    <property type="evidence" value="ECO:0007669"/>
    <property type="project" value="InterPro"/>
</dbReference>
<dbReference type="GO" id="GO:0046983">
    <property type="term" value="F:protein dimerization activity"/>
    <property type="evidence" value="ECO:0007669"/>
    <property type="project" value="InterPro"/>
</dbReference>
<dbReference type="GO" id="GO:0008615">
    <property type="term" value="P:pyridoxine biosynthetic process"/>
    <property type="evidence" value="ECO:0007669"/>
    <property type="project" value="UniProtKB-UniRule"/>
</dbReference>
<dbReference type="CDD" id="cd12158">
    <property type="entry name" value="ErythrP_dh"/>
    <property type="match status" value="1"/>
</dbReference>
<dbReference type="Gene3D" id="3.30.1370.170">
    <property type="match status" value="1"/>
</dbReference>
<dbReference type="Gene3D" id="3.40.50.720">
    <property type="entry name" value="NAD(P)-binding Rossmann-like Domain"/>
    <property type="match status" value="2"/>
</dbReference>
<dbReference type="HAMAP" id="MF_01825">
    <property type="entry name" value="PdxB"/>
    <property type="match status" value="1"/>
</dbReference>
<dbReference type="InterPro" id="IPR050223">
    <property type="entry name" value="D-isomer_2-hydroxyacid_DH"/>
</dbReference>
<dbReference type="InterPro" id="IPR006139">
    <property type="entry name" value="D-isomer_2_OHA_DH_cat_dom"/>
</dbReference>
<dbReference type="InterPro" id="IPR006140">
    <property type="entry name" value="D-isomer_DH_NAD-bd"/>
</dbReference>
<dbReference type="InterPro" id="IPR020921">
    <property type="entry name" value="Erythronate-4-P_DHase"/>
</dbReference>
<dbReference type="InterPro" id="IPR024531">
    <property type="entry name" value="Erythronate-4-P_DHase_dimer"/>
</dbReference>
<dbReference type="InterPro" id="IPR036291">
    <property type="entry name" value="NAD(P)-bd_dom_sf"/>
</dbReference>
<dbReference type="InterPro" id="IPR038251">
    <property type="entry name" value="PdxB_dimer_sf"/>
</dbReference>
<dbReference type="NCBIfam" id="NF001309">
    <property type="entry name" value="PRK00257.1"/>
    <property type="match status" value="1"/>
</dbReference>
<dbReference type="PANTHER" id="PTHR10996:SF178">
    <property type="entry name" value="2-HYDROXYACID DEHYDROGENASE YGL185C-RELATED"/>
    <property type="match status" value="1"/>
</dbReference>
<dbReference type="PANTHER" id="PTHR10996">
    <property type="entry name" value="2-HYDROXYACID DEHYDROGENASE-RELATED"/>
    <property type="match status" value="1"/>
</dbReference>
<dbReference type="Pfam" id="PF00389">
    <property type="entry name" value="2-Hacid_dh"/>
    <property type="match status" value="1"/>
</dbReference>
<dbReference type="Pfam" id="PF02826">
    <property type="entry name" value="2-Hacid_dh_C"/>
    <property type="match status" value="1"/>
</dbReference>
<dbReference type="Pfam" id="PF11890">
    <property type="entry name" value="DUF3410"/>
    <property type="match status" value="1"/>
</dbReference>
<dbReference type="SUPFAM" id="SSF52283">
    <property type="entry name" value="Formate/glycerate dehydrogenase catalytic domain-like"/>
    <property type="match status" value="1"/>
</dbReference>
<dbReference type="SUPFAM" id="SSF51735">
    <property type="entry name" value="NAD(P)-binding Rossmann-fold domains"/>
    <property type="match status" value="1"/>
</dbReference>